<feature type="initiator methionine" description="Removed" evidence="6">
    <location>
        <position position="1"/>
    </location>
</feature>
<feature type="chain" id="PRO_0000151036" description="Transmembrane reductase CYB561D2">
    <location>
        <begin position="2"/>
        <end position="222"/>
    </location>
</feature>
<feature type="topological domain" description="Cytoplasmic" evidence="1">
    <location>
        <begin position="2"/>
        <end position="17"/>
    </location>
</feature>
<feature type="transmembrane region" description="Helical" evidence="3">
    <location>
        <begin position="18"/>
        <end position="38"/>
    </location>
</feature>
<feature type="topological domain" description="Lumenal" evidence="1">
    <location>
        <begin position="39"/>
        <end position="46"/>
    </location>
</feature>
<feature type="transmembrane region" description="Helical" evidence="3">
    <location>
        <begin position="47"/>
        <end position="67"/>
    </location>
</feature>
<feature type="topological domain" description="Cytoplasmic" evidence="1">
    <location>
        <begin position="68"/>
        <end position="85"/>
    </location>
</feature>
<feature type="transmembrane region" description="Helical" evidence="3">
    <location>
        <begin position="86"/>
        <end position="106"/>
    </location>
</feature>
<feature type="topological domain" description="Lumenal" evidence="1">
    <location>
        <begin position="107"/>
        <end position="122"/>
    </location>
</feature>
<feature type="transmembrane region" description="Helical" evidence="3">
    <location>
        <begin position="123"/>
        <end position="143"/>
    </location>
</feature>
<feature type="topological domain" description="Cytoplasmic" evidence="1">
    <location>
        <begin position="144"/>
        <end position="162"/>
    </location>
</feature>
<feature type="transmembrane region" description="Helical" evidence="3">
    <location>
        <begin position="163"/>
        <end position="183"/>
    </location>
</feature>
<feature type="topological domain" description="Lumenal" evidence="1">
    <location>
        <begin position="184"/>
        <end position="186"/>
    </location>
</feature>
<feature type="transmembrane region" description="Helical" evidence="3">
    <location>
        <begin position="187"/>
        <end position="207"/>
    </location>
</feature>
<feature type="topological domain" description="Cytoplasmic" evidence="1">
    <location>
        <begin position="208"/>
        <end position="222"/>
    </location>
</feature>
<feature type="domain" description="Cytochrome b561" evidence="4">
    <location>
        <begin position="14"/>
        <end position="217"/>
    </location>
</feature>
<feature type="binding site" description="axial binding residue" evidence="1">
    <location>
        <position position="48"/>
    </location>
    <ligand>
        <name>heme b</name>
        <dbReference type="ChEBI" id="CHEBI:60344"/>
        <label>1</label>
    </ligand>
    <ligandPart>
        <name>Fe</name>
        <dbReference type="ChEBI" id="CHEBI:18248"/>
    </ligandPart>
</feature>
<feature type="binding site" description="axial binding residue" evidence="1">
    <location>
        <position position="86"/>
    </location>
    <ligand>
        <name>heme b</name>
        <dbReference type="ChEBI" id="CHEBI:60344"/>
        <label>2</label>
    </ligand>
    <ligandPart>
        <name>Fe</name>
        <dbReference type="ChEBI" id="CHEBI:18248"/>
    </ligandPart>
</feature>
<feature type="binding site" description="axial binding residue" evidence="1">
    <location>
        <position position="120"/>
    </location>
    <ligand>
        <name>heme b</name>
        <dbReference type="ChEBI" id="CHEBI:60344"/>
        <label>1</label>
    </ligand>
    <ligandPart>
        <name>Fe</name>
        <dbReference type="ChEBI" id="CHEBI:18248"/>
    </ligandPart>
</feature>
<feature type="binding site" description="axial binding residue" evidence="1">
    <location>
        <position position="159"/>
    </location>
    <ligand>
        <name>heme b</name>
        <dbReference type="ChEBI" id="CHEBI:60344"/>
        <label>2</label>
    </ligand>
    <ligandPart>
        <name>Fe</name>
        <dbReference type="ChEBI" id="CHEBI:18248"/>
    </ligandPart>
</feature>
<name>C56D2_HUMAN</name>
<reference key="1">
    <citation type="submission" date="1998-01" db="EMBL/GenBank/DDBJ databases">
        <title>A new candidate tumor suppressor gene located in the 3p21.3 small cell lung cancer homozygous deletion region.</title>
        <authorList>
            <person name="Bader S."/>
            <person name="Lee C.-C."/>
            <person name="Latif F."/>
            <person name="Sekido Y."/>
            <person name="Duh F.-M."/>
            <person name="Wei M.-H."/>
            <person name="Cundiff S."/>
            <person name="Lerman M.I."/>
            <person name="Minna J.D."/>
        </authorList>
    </citation>
    <scope>NUCLEOTIDE SEQUENCE [MRNA]</scope>
</reference>
<reference key="2">
    <citation type="journal article" date="2004" name="Nat. Genet.">
        <title>Complete sequencing and characterization of 21,243 full-length human cDNAs.</title>
        <authorList>
            <person name="Ota T."/>
            <person name="Suzuki Y."/>
            <person name="Nishikawa T."/>
            <person name="Otsuki T."/>
            <person name="Sugiyama T."/>
            <person name="Irie R."/>
            <person name="Wakamatsu A."/>
            <person name="Hayashi K."/>
            <person name="Sato H."/>
            <person name="Nagai K."/>
            <person name="Kimura K."/>
            <person name="Makita H."/>
            <person name="Sekine M."/>
            <person name="Obayashi M."/>
            <person name="Nishi T."/>
            <person name="Shibahara T."/>
            <person name="Tanaka T."/>
            <person name="Ishii S."/>
            <person name="Yamamoto J."/>
            <person name="Saito K."/>
            <person name="Kawai Y."/>
            <person name="Isono Y."/>
            <person name="Nakamura Y."/>
            <person name="Nagahari K."/>
            <person name="Murakami K."/>
            <person name="Yasuda T."/>
            <person name="Iwayanagi T."/>
            <person name="Wagatsuma M."/>
            <person name="Shiratori A."/>
            <person name="Sudo H."/>
            <person name="Hosoiri T."/>
            <person name="Kaku Y."/>
            <person name="Kodaira H."/>
            <person name="Kondo H."/>
            <person name="Sugawara M."/>
            <person name="Takahashi M."/>
            <person name="Kanda K."/>
            <person name="Yokoi T."/>
            <person name="Furuya T."/>
            <person name="Kikkawa E."/>
            <person name="Omura Y."/>
            <person name="Abe K."/>
            <person name="Kamihara K."/>
            <person name="Katsuta N."/>
            <person name="Sato K."/>
            <person name="Tanikawa M."/>
            <person name="Yamazaki M."/>
            <person name="Ninomiya K."/>
            <person name="Ishibashi T."/>
            <person name="Yamashita H."/>
            <person name="Murakawa K."/>
            <person name="Fujimori K."/>
            <person name="Tanai H."/>
            <person name="Kimata M."/>
            <person name="Watanabe M."/>
            <person name="Hiraoka S."/>
            <person name="Chiba Y."/>
            <person name="Ishida S."/>
            <person name="Ono Y."/>
            <person name="Takiguchi S."/>
            <person name="Watanabe S."/>
            <person name="Yosida M."/>
            <person name="Hotuta T."/>
            <person name="Kusano J."/>
            <person name="Kanehori K."/>
            <person name="Takahashi-Fujii A."/>
            <person name="Hara H."/>
            <person name="Tanase T.-O."/>
            <person name="Nomura Y."/>
            <person name="Togiya S."/>
            <person name="Komai F."/>
            <person name="Hara R."/>
            <person name="Takeuchi K."/>
            <person name="Arita M."/>
            <person name="Imose N."/>
            <person name="Musashino K."/>
            <person name="Yuuki H."/>
            <person name="Oshima A."/>
            <person name="Sasaki N."/>
            <person name="Aotsuka S."/>
            <person name="Yoshikawa Y."/>
            <person name="Matsunawa H."/>
            <person name="Ichihara T."/>
            <person name="Shiohata N."/>
            <person name="Sano S."/>
            <person name="Moriya S."/>
            <person name="Momiyama H."/>
            <person name="Satoh N."/>
            <person name="Takami S."/>
            <person name="Terashima Y."/>
            <person name="Suzuki O."/>
            <person name="Nakagawa S."/>
            <person name="Senoh A."/>
            <person name="Mizoguchi H."/>
            <person name="Goto Y."/>
            <person name="Shimizu F."/>
            <person name="Wakebe H."/>
            <person name="Hishigaki H."/>
            <person name="Watanabe T."/>
            <person name="Sugiyama A."/>
            <person name="Takemoto M."/>
            <person name="Kawakami B."/>
            <person name="Yamazaki M."/>
            <person name="Watanabe K."/>
            <person name="Kumagai A."/>
            <person name="Itakura S."/>
            <person name="Fukuzumi Y."/>
            <person name="Fujimori Y."/>
            <person name="Komiyama M."/>
            <person name="Tashiro H."/>
            <person name="Tanigami A."/>
            <person name="Fujiwara T."/>
            <person name="Ono T."/>
            <person name="Yamada K."/>
            <person name="Fujii Y."/>
            <person name="Ozaki K."/>
            <person name="Hirao M."/>
            <person name="Ohmori Y."/>
            <person name="Kawabata A."/>
            <person name="Hikiji T."/>
            <person name="Kobatake N."/>
            <person name="Inagaki H."/>
            <person name="Ikema Y."/>
            <person name="Okamoto S."/>
            <person name="Okitani R."/>
            <person name="Kawakami T."/>
            <person name="Noguchi S."/>
            <person name="Itoh T."/>
            <person name="Shigeta K."/>
            <person name="Senba T."/>
            <person name="Matsumura K."/>
            <person name="Nakajima Y."/>
            <person name="Mizuno T."/>
            <person name="Morinaga M."/>
            <person name="Sasaki M."/>
            <person name="Togashi T."/>
            <person name="Oyama M."/>
            <person name="Hata H."/>
            <person name="Watanabe M."/>
            <person name="Komatsu T."/>
            <person name="Mizushima-Sugano J."/>
            <person name="Satoh T."/>
            <person name="Shirai Y."/>
            <person name="Takahashi Y."/>
            <person name="Nakagawa K."/>
            <person name="Okumura K."/>
            <person name="Nagase T."/>
            <person name="Nomura N."/>
            <person name="Kikuchi H."/>
            <person name="Masuho Y."/>
            <person name="Yamashita R."/>
            <person name="Nakai K."/>
            <person name="Yada T."/>
            <person name="Nakamura Y."/>
            <person name="Ohara O."/>
            <person name="Isogai T."/>
            <person name="Sugano S."/>
        </authorList>
    </citation>
    <scope>NUCLEOTIDE SEQUENCE [LARGE SCALE MRNA]</scope>
</reference>
<reference key="3">
    <citation type="journal article" date="2006" name="Nature">
        <title>The DNA sequence, annotation and analysis of human chromosome 3.</title>
        <authorList>
            <person name="Muzny D.M."/>
            <person name="Scherer S.E."/>
            <person name="Kaul R."/>
            <person name="Wang J."/>
            <person name="Yu J."/>
            <person name="Sudbrak R."/>
            <person name="Buhay C.J."/>
            <person name="Chen R."/>
            <person name="Cree A."/>
            <person name="Ding Y."/>
            <person name="Dugan-Rocha S."/>
            <person name="Gill R."/>
            <person name="Gunaratne P."/>
            <person name="Harris R.A."/>
            <person name="Hawes A.C."/>
            <person name="Hernandez J."/>
            <person name="Hodgson A.V."/>
            <person name="Hume J."/>
            <person name="Jackson A."/>
            <person name="Khan Z.M."/>
            <person name="Kovar-Smith C."/>
            <person name="Lewis L.R."/>
            <person name="Lozado R.J."/>
            <person name="Metzker M.L."/>
            <person name="Milosavljevic A."/>
            <person name="Miner G.R."/>
            <person name="Morgan M.B."/>
            <person name="Nazareth L.V."/>
            <person name="Scott G."/>
            <person name="Sodergren E."/>
            <person name="Song X.-Z."/>
            <person name="Steffen D."/>
            <person name="Wei S."/>
            <person name="Wheeler D.A."/>
            <person name="Wright M.W."/>
            <person name="Worley K.C."/>
            <person name="Yuan Y."/>
            <person name="Zhang Z."/>
            <person name="Adams C.Q."/>
            <person name="Ansari-Lari M.A."/>
            <person name="Ayele M."/>
            <person name="Brown M.J."/>
            <person name="Chen G."/>
            <person name="Chen Z."/>
            <person name="Clendenning J."/>
            <person name="Clerc-Blankenburg K.P."/>
            <person name="Chen R."/>
            <person name="Chen Z."/>
            <person name="Davis C."/>
            <person name="Delgado O."/>
            <person name="Dinh H.H."/>
            <person name="Dong W."/>
            <person name="Draper H."/>
            <person name="Ernst S."/>
            <person name="Fu G."/>
            <person name="Gonzalez-Garay M.L."/>
            <person name="Garcia D.K."/>
            <person name="Gillett W."/>
            <person name="Gu J."/>
            <person name="Hao B."/>
            <person name="Haugen E."/>
            <person name="Havlak P."/>
            <person name="He X."/>
            <person name="Hennig S."/>
            <person name="Hu S."/>
            <person name="Huang W."/>
            <person name="Jackson L.R."/>
            <person name="Jacob L.S."/>
            <person name="Kelly S.H."/>
            <person name="Kube M."/>
            <person name="Levy R."/>
            <person name="Li Z."/>
            <person name="Liu B."/>
            <person name="Liu J."/>
            <person name="Liu W."/>
            <person name="Lu J."/>
            <person name="Maheshwari M."/>
            <person name="Nguyen B.-V."/>
            <person name="Okwuonu G.O."/>
            <person name="Palmeiri A."/>
            <person name="Pasternak S."/>
            <person name="Perez L.M."/>
            <person name="Phelps K.A."/>
            <person name="Plopper F.J."/>
            <person name="Qiang B."/>
            <person name="Raymond C."/>
            <person name="Rodriguez R."/>
            <person name="Saenphimmachak C."/>
            <person name="Santibanez J."/>
            <person name="Shen H."/>
            <person name="Shen Y."/>
            <person name="Subramanian S."/>
            <person name="Tabor P.E."/>
            <person name="Verduzco D."/>
            <person name="Waldron L."/>
            <person name="Wang J."/>
            <person name="Wang J."/>
            <person name="Wang Q."/>
            <person name="Williams G.A."/>
            <person name="Wong G.K.-S."/>
            <person name="Yao Z."/>
            <person name="Zhang J."/>
            <person name="Zhang X."/>
            <person name="Zhao G."/>
            <person name="Zhou J."/>
            <person name="Zhou Y."/>
            <person name="Nelson D."/>
            <person name="Lehrach H."/>
            <person name="Reinhardt R."/>
            <person name="Naylor S.L."/>
            <person name="Yang H."/>
            <person name="Olson M."/>
            <person name="Weinstock G."/>
            <person name="Gibbs R.A."/>
        </authorList>
    </citation>
    <scope>NUCLEOTIDE SEQUENCE [LARGE SCALE GENOMIC DNA]</scope>
</reference>
<reference key="4">
    <citation type="submission" date="2005-07" db="EMBL/GenBank/DDBJ databases">
        <authorList>
            <person name="Mural R.J."/>
            <person name="Istrail S."/>
            <person name="Sutton G.G."/>
            <person name="Florea L."/>
            <person name="Halpern A.L."/>
            <person name="Mobarry C.M."/>
            <person name="Lippert R."/>
            <person name="Walenz B."/>
            <person name="Shatkay H."/>
            <person name="Dew I."/>
            <person name="Miller J.R."/>
            <person name="Flanigan M.J."/>
            <person name="Edwards N.J."/>
            <person name="Bolanos R."/>
            <person name="Fasulo D."/>
            <person name="Halldorsson B.V."/>
            <person name="Hannenhalli S."/>
            <person name="Turner R."/>
            <person name="Yooseph S."/>
            <person name="Lu F."/>
            <person name="Nusskern D.R."/>
            <person name="Shue B.C."/>
            <person name="Zheng X.H."/>
            <person name="Zhong F."/>
            <person name="Delcher A.L."/>
            <person name="Huson D.H."/>
            <person name="Kravitz S.A."/>
            <person name="Mouchard L."/>
            <person name="Reinert K."/>
            <person name="Remington K.A."/>
            <person name="Clark A.G."/>
            <person name="Waterman M.S."/>
            <person name="Eichler E.E."/>
            <person name="Adams M.D."/>
            <person name="Hunkapiller M.W."/>
            <person name="Myers E.W."/>
            <person name="Venter J.C."/>
        </authorList>
    </citation>
    <scope>NUCLEOTIDE SEQUENCE [LARGE SCALE GENOMIC DNA]</scope>
</reference>
<reference key="5">
    <citation type="journal article" date="2004" name="Genome Res.">
        <title>The status, quality, and expansion of the NIH full-length cDNA project: the Mammalian Gene Collection (MGC).</title>
        <authorList>
            <consortium name="The MGC Project Team"/>
        </authorList>
    </citation>
    <scope>NUCLEOTIDE SEQUENCE [LARGE SCALE MRNA]</scope>
    <source>
        <tissue>Pancreas</tissue>
    </source>
</reference>
<reference key="6">
    <citation type="journal article" date="2009" name="Proc. Natl. Acad. Sci. U.S.A.">
        <title>Global profiling of protease cleavage sites by chemoselective labeling of protein N-termini.</title>
        <authorList>
            <person name="Xu G."/>
            <person name="Shin S.B."/>
            <person name="Jaffrey S.R."/>
        </authorList>
    </citation>
    <scope>PROTEIN SEQUENCE [LARGE SCALE ANALYSIS] OF 2-14</scope>
    <source>
        <tissue>Leukemic T-cell</tissue>
    </source>
</reference>
<reference key="7">
    <citation type="journal article" date="2000" name="Cancer Res.">
        <title>The 630-kb lung cancer homozygous deletion region on human chromosome 3p21.3: identification and evaluation of the resident candidate tumor suppressor genes.</title>
        <authorList>
            <consortium name="The international lung cancer chromosome 3p21.3 tumor suppressor gene consortium"/>
            <person name="Lerman M.I."/>
            <person name="Minna J.D."/>
        </authorList>
    </citation>
    <scope>DISCUSSION OF SEQUENCE</scope>
</reference>
<reference key="8">
    <citation type="journal article" date="2009" name="BioFactors">
        <title>Functional expression and characterization of human 101F6 protein, a homologue of cytochrome b561 and a candidate tumor suppressor gene product.</title>
        <authorList>
            <person name="Recuenco M.C."/>
            <person name="Fujito M."/>
            <person name="Rahman M.M."/>
            <person name="Sakamoto Y."/>
            <person name="Takeuchi F."/>
            <person name="Tsubaki M."/>
        </authorList>
    </citation>
    <scope>COFACTOR</scope>
    <scope>BIOPHYSICOCHEMICAL PROPERTIES</scope>
</reference>
<reference key="9">
    <citation type="journal article" date="2013" name="Biochemistry">
        <title>Electron transfer reactions of candidate tumor suppressor 101F6 protein, a cytochrome b561 homologue, with ascorbate and monodehydroascorbate radical.</title>
        <authorList>
            <person name="Recuenco M.C."/>
            <person name="Rahman M.M."/>
            <person name="Takeuchi F."/>
            <person name="Kobayashi K."/>
            <person name="Tsubaki M."/>
        </authorList>
    </citation>
    <scope>FUNCTION</scope>
    <scope>CATALYTIC ACTIVITY</scope>
    <scope>COFACTOR</scope>
    <scope>BIOPHYSICOCHEMICAL PROPERTIES</scope>
</reference>
<reference key="10">
    <citation type="journal article" date="2013" name="J. Biochem.">
        <title>Functional characterization of the recombinant human tumour suppressor 101F6 protein, a cytochrome b(561) homologue.</title>
        <authorList>
            <person name="Recuenco M.C."/>
            <person name="Rahman M.M."/>
            <person name="Sakamoto Y."/>
            <person name="Takeuchi F."/>
            <person name="Hori H."/>
            <person name="Tsubaki M."/>
        </authorList>
    </citation>
    <scope>FUNCTION</scope>
    <scope>CATALYTIC ACTIVITY</scope>
    <scope>COFACTOR</scope>
    <scope>BIOPHYSICOCHEMICAL PROPERTIES</scope>
    <scope>IDENTIFICATION BY MASS SPECTROMETRY</scope>
</reference>
<evidence type="ECO:0000250" key="1">
    <source>
        <dbReference type="UniProtKB" id="Q53TN4"/>
    </source>
</evidence>
<evidence type="ECO:0000250" key="2">
    <source>
        <dbReference type="UniProtKB" id="Q9WUE3"/>
    </source>
</evidence>
<evidence type="ECO:0000255" key="3"/>
<evidence type="ECO:0000255" key="4">
    <source>
        <dbReference type="PROSITE-ProRule" id="PRU00242"/>
    </source>
</evidence>
<evidence type="ECO:0000269" key="5">
    <source>
    </source>
</evidence>
<evidence type="ECO:0000269" key="6">
    <source>
    </source>
</evidence>
<evidence type="ECO:0000269" key="7">
    <source>
    </source>
</evidence>
<evidence type="ECO:0000269" key="8">
    <source>
    </source>
</evidence>
<evidence type="ECO:0000303" key="9">
    <source>
    </source>
</evidence>
<evidence type="ECO:0000305" key="10">
    <source>
    </source>
</evidence>
<evidence type="ECO:0000305" key="11">
    <source>
    </source>
</evidence>
<evidence type="ECO:0000312" key="12">
    <source>
        <dbReference type="HGNC" id="HGNC:30253"/>
    </source>
</evidence>
<gene>
    <name evidence="12" type="primary">CYB561D2</name>
    <name evidence="9" type="synonym">101F6</name>
    <name type="ORF">LUCA12.2</name>
</gene>
<keyword id="KW-0968">Cytoplasmic vesicle</keyword>
<keyword id="KW-0903">Direct protein sequencing</keyword>
<keyword id="KW-0249">Electron transport</keyword>
<keyword id="KW-0256">Endoplasmic reticulum</keyword>
<keyword id="KW-0349">Heme</keyword>
<keyword id="KW-0408">Iron</keyword>
<keyword id="KW-0472">Membrane</keyword>
<keyword id="KW-0479">Metal-binding</keyword>
<keyword id="KW-1267">Proteomics identification</keyword>
<keyword id="KW-1185">Reference proteome</keyword>
<keyword id="KW-1278">Translocase</keyword>
<keyword id="KW-0812">Transmembrane</keyword>
<keyword id="KW-1133">Transmembrane helix</keyword>
<keyword id="KW-0813">Transport</keyword>
<accession>O14569</accession>
<accession>A8K552</accession>
<organism>
    <name type="scientific">Homo sapiens</name>
    <name type="common">Human</name>
    <dbReference type="NCBI Taxonomy" id="9606"/>
    <lineage>
        <taxon>Eukaryota</taxon>
        <taxon>Metazoa</taxon>
        <taxon>Chordata</taxon>
        <taxon>Craniata</taxon>
        <taxon>Vertebrata</taxon>
        <taxon>Euteleostomi</taxon>
        <taxon>Mammalia</taxon>
        <taxon>Eutheria</taxon>
        <taxon>Euarchontoglires</taxon>
        <taxon>Primates</taxon>
        <taxon>Haplorrhini</taxon>
        <taxon>Catarrhini</taxon>
        <taxon>Hominidae</taxon>
        <taxon>Homo</taxon>
    </lineage>
</organism>
<proteinExistence type="evidence at protein level"/>
<protein>
    <recommendedName>
        <fullName evidence="10 11">Transmembrane reductase CYB561D2</fullName>
        <ecNumber evidence="7 8">7.2.1.3</ecNumber>
    </recommendedName>
    <alternativeName>
        <fullName evidence="12">Cytochrome b561 domain-containing protein 2</fullName>
    </alternativeName>
    <alternativeName>
        <fullName evidence="9">Putative tumor suppressor protein 101F6</fullName>
    </alternativeName>
</protein>
<sequence length="222" mass="23974">MALSAETESHIYRALRTASGAAAHLVALGFTIFVAVLARPGSSLFSWHPVLMSLAFSFLMTEALLVFSPESSLLHSLSRKGRARCHWVLQLLALLCALLGLGLVILHKEQLGKAHLVTRHGQAGLLAVLWAGLQCSGGVGLLYPKLLPRWPLAKLKLYHATSGLVGYLLGSASLLLGMCSLWFTASVTGAAWYLAVLCPVLTSLVIMNQVSNAYLYRKRIQP</sequence>
<dbReference type="EC" id="7.2.1.3" evidence="7 8"/>
<dbReference type="EMBL" id="AF040704">
    <property type="protein sequence ID" value="AAC70911.1"/>
    <property type="molecule type" value="mRNA"/>
</dbReference>
<dbReference type="EMBL" id="AK291167">
    <property type="protein sequence ID" value="BAF83856.1"/>
    <property type="molecule type" value="mRNA"/>
</dbReference>
<dbReference type="EMBL" id="AC002481">
    <property type="protein sequence ID" value="AAB67309.1"/>
    <property type="molecule type" value="Genomic_DNA"/>
</dbReference>
<dbReference type="EMBL" id="CH471055">
    <property type="protein sequence ID" value="EAW65113.1"/>
    <property type="molecule type" value="Genomic_DNA"/>
</dbReference>
<dbReference type="EMBL" id="BC047691">
    <property type="protein sequence ID" value="AAH47691.1"/>
    <property type="molecule type" value="mRNA"/>
</dbReference>
<dbReference type="CCDS" id="CCDS2827.1"/>
<dbReference type="RefSeq" id="NP_001278213.1">
    <property type="nucleotide sequence ID" value="NM_001291284.2"/>
</dbReference>
<dbReference type="RefSeq" id="NP_001401634.1">
    <property type="nucleotide sequence ID" value="NM_001414705.1"/>
</dbReference>
<dbReference type="RefSeq" id="NP_001401635.1">
    <property type="nucleotide sequence ID" value="NM_001414706.1"/>
</dbReference>
<dbReference type="RefSeq" id="NP_001401636.1">
    <property type="nucleotide sequence ID" value="NM_001414707.1"/>
</dbReference>
<dbReference type="RefSeq" id="NP_001401637.1">
    <property type="nucleotide sequence ID" value="NM_001414708.1"/>
</dbReference>
<dbReference type="RefSeq" id="NP_001401638.1">
    <property type="nucleotide sequence ID" value="NM_001414709.1"/>
</dbReference>
<dbReference type="RefSeq" id="NP_001401639.1">
    <property type="nucleotide sequence ID" value="NM_001414710.1"/>
</dbReference>
<dbReference type="RefSeq" id="NP_001401640.1">
    <property type="nucleotide sequence ID" value="NM_001414711.1"/>
</dbReference>
<dbReference type="RefSeq" id="NP_008953.1">
    <property type="nucleotide sequence ID" value="NM_007022.5"/>
</dbReference>
<dbReference type="SMR" id="O14569"/>
<dbReference type="BioGRID" id="116252">
    <property type="interactions" value="31"/>
</dbReference>
<dbReference type="FunCoup" id="O14569">
    <property type="interactions" value="275"/>
</dbReference>
<dbReference type="IntAct" id="O14569">
    <property type="interactions" value="22"/>
</dbReference>
<dbReference type="STRING" id="9606.ENSP00000391209"/>
<dbReference type="iPTMnet" id="O14569"/>
<dbReference type="PhosphoSitePlus" id="O14569"/>
<dbReference type="BioMuta" id="CYB561D2"/>
<dbReference type="jPOST" id="O14569"/>
<dbReference type="MassIVE" id="O14569"/>
<dbReference type="PaxDb" id="9606-ENSP00000391209"/>
<dbReference type="PeptideAtlas" id="O14569"/>
<dbReference type="ProteomicsDB" id="48090"/>
<dbReference type="Pumba" id="O14569"/>
<dbReference type="Antibodypedia" id="30954">
    <property type="antibodies" value="137 antibodies from 27 providers"/>
</dbReference>
<dbReference type="DNASU" id="11068"/>
<dbReference type="Ensembl" id="ENST00000232508.9">
    <property type="protein sequence ID" value="ENSP00000232508.5"/>
    <property type="gene ID" value="ENSG00000114395.11"/>
</dbReference>
<dbReference type="Ensembl" id="ENST00000418577.1">
    <property type="protein sequence ID" value="ENSP00000391209.1"/>
    <property type="gene ID" value="ENSG00000114395.11"/>
</dbReference>
<dbReference type="Ensembl" id="ENST00000424512.5">
    <property type="protein sequence ID" value="ENSP00000410663.1"/>
    <property type="gene ID" value="ENSG00000114395.11"/>
</dbReference>
<dbReference type="Ensembl" id="ENST00000425346.6">
    <property type="protein sequence ID" value="ENSP00000400454.1"/>
    <property type="gene ID" value="ENSG00000114395.11"/>
</dbReference>
<dbReference type="GeneID" id="11068"/>
<dbReference type="KEGG" id="hsa:11068"/>
<dbReference type="MANE-Select" id="ENST00000425346.6">
    <property type="protein sequence ID" value="ENSP00000400454.1"/>
    <property type="RefSeq nucleotide sequence ID" value="NM_001291284.2"/>
    <property type="RefSeq protein sequence ID" value="NP_001278213.1"/>
</dbReference>
<dbReference type="UCSC" id="uc003dal.4">
    <property type="organism name" value="human"/>
</dbReference>
<dbReference type="AGR" id="HGNC:30253"/>
<dbReference type="CTD" id="11068"/>
<dbReference type="DisGeNET" id="11068"/>
<dbReference type="GeneCards" id="CYB561D2"/>
<dbReference type="HGNC" id="HGNC:30253">
    <property type="gene designation" value="CYB561D2"/>
</dbReference>
<dbReference type="HPA" id="ENSG00000114395">
    <property type="expression patterns" value="Low tissue specificity"/>
</dbReference>
<dbReference type="MalaCards" id="CYB561D2"/>
<dbReference type="MIM" id="607068">
    <property type="type" value="gene"/>
</dbReference>
<dbReference type="neXtProt" id="NX_O14569"/>
<dbReference type="OpenTargets" id="ENSG00000114395"/>
<dbReference type="PharmGKB" id="PA134977950"/>
<dbReference type="VEuPathDB" id="HostDB:ENSG00000114395"/>
<dbReference type="eggNOG" id="ENOG502QRPJ">
    <property type="taxonomic scope" value="Eukaryota"/>
</dbReference>
<dbReference type="GeneTree" id="ENSGT00440000038072"/>
<dbReference type="HOGENOM" id="CLU_072399_3_0_1"/>
<dbReference type="InParanoid" id="O14569"/>
<dbReference type="OMA" id="IFYNKHL"/>
<dbReference type="OrthoDB" id="432881at2759"/>
<dbReference type="PAN-GO" id="O14569">
    <property type="GO annotations" value="3 GO annotations based on evolutionary models"/>
</dbReference>
<dbReference type="PhylomeDB" id="O14569"/>
<dbReference type="TreeFam" id="TF323584"/>
<dbReference type="PathwayCommons" id="O14569"/>
<dbReference type="SignaLink" id="O14569"/>
<dbReference type="BioGRID-ORCS" id="11068">
    <property type="hits" value="18 hits in 1152 CRISPR screens"/>
</dbReference>
<dbReference type="ChiTaRS" id="CYB561D2">
    <property type="organism name" value="human"/>
</dbReference>
<dbReference type="GenomeRNAi" id="11068"/>
<dbReference type="Pharos" id="O14569">
    <property type="development level" value="Tbio"/>
</dbReference>
<dbReference type="PRO" id="PR:O14569"/>
<dbReference type="Proteomes" id="UP000005640">
    <property type="component" value="Chromosome 3"/>
</dbReference>
<dbReference type="RNAct" id="O14569">
    <property type="molecule type" value="protein"/>
</dbReference>
<dbReference type="Bgee" id="ENSG00000114395">
    <property type="expression patterns" value="Expressed in granulocyte and 150 other cell types or tissues"/>
</dbReference>
<dbReference type="ExpressionAtlas" id="O14569">
    <property type="expression patterns" value="baseline and differential"/>
</dbReference>
<dbReference type="GO" id="GO:0030659">
    <property type="term" value="C:cytoplasmic vesicle membrane"/>
    <property type="evidence" value="ECO:0007669"/>
    <property type="project" value="UniProtKB-SubCell"/>
</dbReference>
<dbReference type="GO" id="GO:0005783">
    <property type="term" value="C:endoplasmic reticulum"/>
    <property type="evidence" value="ECO:0000250"/>
    <property type="project" value="UniProtKB"/>
</dbReference>
<dbReference type="GO" id="GO:0005789">
    <property type="term" value="C:endoplasmic reticulum membrane"/>
    <property type="evidence" value="ECO:0007669"/>
    <property type="project" value="UniProtKB-SubCell"/>
</dbReference>
<dbReference type="GO" id="GO:0031982">
    <property type="term" value="C:vesicle"/>
    <property type="evidence" value="ECO:0000250"/>
    <property type="project" value="UniProtKB"/>
</dbReference>
<dbReference type="GO" id="GO:0020037">
    <property type="term" value="F:heme binding"/>
    <property type="evidence" value="ECO:0000314"/>
    <property type="project" value="UniProtKB"/>
</dbReference>
<dbReference type="GO" id="GO:0046872">
    <property type="term" value="F:metal ion binding"/>
    <property type="evidence" value="ECO:0007669"/>
    <property type="project" value="UniProtKB-KW"/>
</dbReference>
<dbReference type="GO" id="GO:0140571">
    <property type="term" value="F:transmembrane ascorbate ferrireductase activity"/>
    <property type="evidence" value="ECO:0000250"/>
    <property type="project" value="UniProtKB"/>
</dbReference>
<dbReference type="GO" id="GO:0140575">
    <property type="term" value="F:transmembrane monodehydroascorbate reductase activity"/>
    <property type="evidence" value="ECO:0000314"/>
    <property type="project" value="UniProtKB"/>
</dbReference>
<dbReference type="GO" id="GO:0140576">
    <property type="term" value="P:ascorbate homeostasis"/>
    <property type="evidence" value="ECO:0000314"/>
    <property type="project" value="UniProtKB"/>
</dbReference>
<dbReference type="CDD" id="cd08761">
    <property type="entry name" value="Cyt_b561_CYB561D2_like"/>
    <property type="match status" value="1"/>
</dbReference>
<dbReference type="FunFam" id="1.20.120.1770:FF:000002">
    <property type="entry name" value="Cytochrome b561 domain-containing protein 2"/>
    <property type="match status" value="1"/>
</dbReference>
<dbReference type="Gene3D" id="1.20.120.1770">
    <property type="match status" value="1"/>
</dbReference>
<dbReference type="InterPro" id="IPR045150">
    <property type="entry name" value="CYB561D1/2"/>
</dbReference>
<dbReference type="InterPro" id="IPR006593">
    <property type="entry name" value="Cyt_b561/ferric_Rdtase_TM"/>
</dbReference>
<dbReference type="PANTHER" id="PTHR15422">
    <property type="entry name" value="OS05G0565100 PROTEIN"/>
    <property type="match status" value="1"/>
</dbReference>
<dbReference type="PANTHER" id="PTHR15422:SF21">
    <property type="entry name" value="TRANSMEMBRANE REDUCTASE CYB561D2"/>
    <property type="match status" value="1"/>
</dbReference>
<dbReference type="Pfam" id="PF03188">
    <property type="entry name" value="Cytochrom_B561"/>
    <property type="match status" value="1"/>
</dbReference>
<dbReference type="SMART" id="SM00665">
    <property type="entry name" value="B561"/>
    <property type="match status" value="1"/>
</dbReference>
<dbReference type="PROSITE" id="PS50939">
    <property type="entry name" value="CYTOCHROME_B561"/>
    <property type="match status" value="1"/>
</dbReference>
<comment type="function">
    <text evidence="7 8">Transmembrane reductase that may use ascorbate as an electron donor in the cytoplasm and transfer electrons across endoplasmic reticulum membranes to reduce monodehydro-L-ascorbate radical and iron cations Fe(3+) in the lumen of that compartment.</text>
</comment>
<comment type="catalytic activity">
    <reaction evidence="7 8">
        <text>monodehydro-L-ascorbate radical(out) + L-ascorbate(in) = monodehydro-L-ascorbate radical(in) + L-ascorbate(out)</text>
        <dbReference type="Rhea" id="RHEA:66524"/>
        <dbReference type="ChEBI" id="CHEBI:38290"/>
        <dbReference type="ChEBI" id="CHEBI:59513"/>
    </reaction>
    <physiologicalReaction direction="left-to-right" evidence="11">
        <dbReference type="Rhea" id="RHEA:66525"/>
    </physiologicalReaction>
</comment>
<comment type="catalytic activity">
    <reaction evidence="2">
        <text>Fe(3+)(out) + L-ascorbate(in) = monodehydro-L-ascorbate radical(in) + Fe(2+)(out) + H(+)</text>
        <dbReference type="Rhea" id="RHEA:30403"/>
        <dbReference type="ChEBI" id="CHEBI:15378"/>
        <dbReference type="ChEBI" id="CHEBI:29033"/>
        <dbReference type="ChEBI" id="CHEBI:29034"/>
        <dbReference type="ChEBI" id="CHEBI:38290"/>
        <dbReference type="ChEBI" id="CHEBI:59513"/>
        <dbReference type="EC" id="7.2.1.3"/>
    </reaction>
    <physiologicalReaction direction="left-to-right" evidence="2">
        <dbReference type="Rhea" id="RHEA:30404"/>
    </physiologicalReaction>
</comment>
<comment type="cofactor">
    <cofactor evidence="5 7 8">
        <name>heme b</name>
        <dbReference type="ChEBI" id="CHEBI:60344"/>
    </cofactor>
    <text evidence="7 8">Binds 2 heme b groups non-covalently.</text>
</comment>
<comment type="biophysicochemical properties">
    <phDependence>
        <text evidence="8">Optimum pH is 6-7 for the electron donation reaction to monodehydroascorbate reaction (PubMed:23641721). Optimum pH is around 6.5 for re-reduction reaction process of the oxidized heme with ascorbate (PubMed:23641721).</text>
    </phDependence>
    <redoxPotential>
        <text evidence="5 7">E(0) is +89.5 mV for the high potential heme and +13.1 mV for the low potential heme (PubMed:19734123). E(0) is +109 mV for the high potential heme and +26 mV for the low potential heme (PubMed:23235316).</text>
    </redoxPotential>
</comment>
<comment type="interaction">
    <interactant intactId="EBI-717654">
        <id>O14569</id>
    </interactant>
    <interactant intactId="EBI-11343438">
        <id>Q3SXY8</id>
        <label>ARL13B</label>
    </interactant>
    <organismsDiffer>false</organismsDiffer>
    <experiments>3</experiments>
</comment>
<comment type="interaction">
    <interactant intactId="EBI-717654">
        <id>O14569</id>
    </interactant>
    <interactant intactId="EBI-7797864">
        <id>P11912</id>
        <label>CD79A</label>
    </interactant>
    <organismsDiffer>false</organismsDiffer>
    <experiments>3</experiments>
</comment>
<comment type="interaction">
    <interactant intactId="EBI-717654">
        <id>O14569</id>
    </interactant>
    <interactant intactId="EBI-740744">
        <id>O95471</id>
        <label>CLDN7</label>
    </interactant>
    <organismsDiffer>false</organismsDiffer>
    <experiments>3</experiments>
</comment>
<comment type="interaction">
    <interactant intactId="EBI-717654">
        <id>O14569</id>
    </interactant>
    <interactant intactId="EBI-17710733">
        <id>Q86T13</id>
        <label>CLEC14A</label>
    </interactant>
    <organismsDiffer>false</organismsDiffer>
    <experiments>3</experiments>
</comment>
<comment type="interaction">
    <interactant intactId="EBI-717654">
        <id>O14569</id>
    </interactant>
    <interactant intactId="EBI-724524">
        <id>O75208</id>
        <label>COQ9</label>
    </interactant>
    <organismsDiffer>false</organismsDiffer>
    <experiments>3</experiments>
</comment>
<comment type="interaction">
    <interactant intactId="EBI-717654">
        <id>O14569</id>
    </interactant>
    <interactant intactId="EBI-6942903">
        <id>Q96BA8</id>
        <label>CREB3L1</label>
    </interactant>
    <organismsDiffer>false</organismsDiffer>
    <experiments>3</experiments>
</comment>
<comment type="interaction">
    <interactant intactId="EBI-717654">
        <id>O14569</id>
    </interactant>
    <interactant intactId="EBI-781551">
        <id>Q9Y282</id>
        <label>ERGIC3</label>
    </interactant>
    <organismsDiffer>false</organismsDiffer>
    <experiments>3</experiments>
</comment>
<comment type="interaction">
    <interactant intactId="EBI-717654">
        <id>O14569</id>
    </interactant>
    <interactant intactId="EBI-18304435">
        <id>Q5JX71</id>
        <label>FAM209A</label>
    </interactant>
    <organismsDiffer>false</organismsDiffer>
    <experiments>3</experiments>
</comment>
<comment type="interaction">
    <interactant intactId="EBI-717654">
        <id>O14569</id>
    </interactant>
    <interactant intactId="EBI-11721746">
        <id>Q8TED1</id>
        <label>GPX8</label>
    </interactant>
    <organismsDiffer>false</organismsDiffer>
    <experiments>3</experiments>
</comment>
<comment type="interaction">
    <interactant intactId="EBI-717654">
        <id>O14569</id>
    </interactant>
    <interactant intactId="EBI-12080840">
        <id>P27815-4</id>
        <label>PDE4A</label>
    </interactant>
    <organismsDiffer>false</organismsDiffer>
    <experiments>3</experiments>
</comment>
<comment type="interaction">
    <interactant intactId="EBI-717654">
        <id>O14569</id>
    </interactant>
    <interactant intactId="EBI-1050125">
        <id>O15173</id>
        <label>PGRMC2</label>
    </interactant>
    <organismsDiffer>false</organismsDiffer>
    <experiments>3</experiments>
</comment>
<comment type="interaction">
    <interactant intactId="EBI-717654">
        <id>O14569</id>
    </interactant>
    <interactant intactId="EBI-1220572">
        <id>P54829</id>
        <label>PTPN5</label>
    </interactant>
    <organismsDiffer>false</organismsDiffer>
    <experiments>3</experiments>
</comment>
<comment type="interaction">
    <interactant intactId="EBI-717654">
        <id>O14569</id>
    </interactant>
    <interactant intactId="EBI-1056589">
        <id>Q96TC7</id>
        <label>RMDN3</label>
    </interactant>
    <organismsDiffer>false</organismsDiffer>
    <experiments>3</experiments>
</comment>
<comment type="interaction">
    <interactant intactId="EBI-717654">
        <id>O14569</id>
    </interactant>
    <interactant intactId="EBI-17595455">
        <id>P54219-3</id>
        <label>SLC18A1</label>
    </interactant>
    <organismsDiffer>false</organismsDiffer>
    <experiments>3</experiments>
</comment>
<comment type="interaction">
    <interactant intactId="EBI-717654">
        <id>O14569</id>
    </interactant>
    <interactant intactId="EBI-8644112">
        <id>Q9BRI3</id>
        <label>SLC30A2</label>
    </interactant>
    <organismsDiffer>false</organismsDiffer>
    <experiments>3</experiments>
</comment>
<comment type="interaction">
    <interactant intactId="EBI-717654">
        <id>O14569</id>
    </interactant>
    <interactant intactId="EBI-13329239">
        <id>Q6P9G4</id>
        <label>TMEM154</label>
    </interactant>
    <organismsDiffer>false</organismsDiffer>
    <experiments>3</experiments>
</comment>
<comment type="interaction">
    <interactant intactId="EBI-717654">
        <id>O14569</id>
    </interactant>
    <interactant intactId="EBI-3923061">
        <id>Q96B21</id>
        <label>TMEM45B</label>
    </interactant>
    <organismsDiffer>false</organismsDiffer>
    <experiments>3</experiments>
</comment>
<comment type="subcellular location">
    <subcellularLocation>
        <location evidence="2">Endoplasmic reticulum membrane</location>
        <topology evidence="1">Multi-pass membrane protein</topology>
    </subcellularLocation>
    <subcellularLocation>
        <location evidence="2">Cytoplasmic vesicle membrane</location>
        <topology evidence="1">Multi-pass membrane protein</topology>
    </subcellularLocation>
</comment>